<evidence type="ECO:0000255" key="1">
    <source>
        <dbReference type="HAMAP-Rule" id="MF_02006"/>
    </source>
</evidence>
<reference key="1">
    <citation type="submission" date="2008-08" db="EMBL/GenBank/DDBJ databases">
        <title>Complete sequence of Vibrio fischeri strain MJ11.</title>
        <authorList>
            <person name="Mandel M.J."/>
            <person name="Stabb E.V."/>
            <person name="Ruby E.G."/>
            <person name="Ferriera S."/>
            <person name="Johnson J."/>
            <person name="Kravitz S."/>
            <person name="Beeson K."/>
            <person name="Sutton G."/>
            <person name="Rogers Y.-H."/>
            <person name="Friedman R."/>
            <person name="Frazier M."/>
            <person name="Venter J.C."/>
        </authorList>
    </citation>
    <scope>NUCLEOTIDE SEQUENCE [LARGE SCALE GENOMIC DNA]</scope>
    <source>
        <strain>MJ11</strain>
    </source>
</reference>
<dbReference type="EC" id="6.1.1.1" evidence="1"/>
<dbReference type="EMBL" id="CP001139">
    <property type="protein sequence ID" value="ACH66926.1"/>
    <property type="molecule type" value="Genomic_DNA"/>
</dbReference>
<dbReference type="RefSeq" id="WP_011262278.1">
    <property type="nucleotide sequence ID" value="NC_011184.1"/>
</dbReference>
<dbReference type="SMR" id="B5FFR9"/>
<dbReference type="GeneID" id="54164424"/>
<dbReference type="KEGG" id="vfm:VFMJ11_1854"/>
<dbReference type="HOGENOM" id="CLU_024003_0_3_6"/>
<dbReference type="Proteomes" id="UP000001857">
    <property type="component" value="Chromosome I"/>
</dbReference>
<dbReference type="GO" id="GO:0005829">
    <property type="term" value="C:cytosol"/>
    <property type="evidence" value="ECO:0007669"/>
    <property type="project" value="TreeGrafter"/>
</dbReference>
<dbReference type="GO" id="GO:0005524">
    <property type="term" value="F:ATP binding"/>
    <property type="evidence" value="ECO:0007669"/>
    <property type="project" value="UniProtKB-UniRule"/>
</dbReference>
<dbReference type="GO" id="GO:0003723">
    <property type="term" value="F:RNA binding"/>
    <property type="evidence" value="ECO:0007669"/>
    <property type="project" value="UniProtKB-KW"/>
</dbReference>
<dbReference type="GO" id="GO:0004831">
    <property type="term" value="F:tyrosine-tRNA ligase activity"/>
    <property type="evidence" value="ECO:0007669"/>
    <property type="project" value="UniProtKB-UniRule"/>
</dbReference>
<dbReference type="GO" id="GO:0006437">
    <property type="term" value="P:tyrosyl-tRNA aminoacylation"/>
    <property type="evidence" value="ECO:0007669"/>
    <property type="project" value="UniProtKB-UniRule"/>
</dbReference>
<dbReference type="CDD" id="cd00165">
    <property type="entry name" value="S4"/>
    <property type="match status" value="1"/>
</dbReference>
<dbReference type="CDD" id="cd00805">
    <property type="entry name" value="TyrRS_core"/>
    <property type="match status" value="1"/>
</dbReference>
<dbReference type="FunFam" id="1.10.240.10:FF:000001">
    <property type="entry name" value="Tyrosine--tRNA ligase"/>
    <property type="match status" value="1"/>
</dbReference>
<dbReference type="FunFam" id="3.40.50.620:FF:000008">
    <property type="entry name" value="Tyrosine--tRNA ligase"/>
    <property type="match status" value="1"/>
</dbReference>
<dbReference type="Gene3D" id="3.40.50.620">
    <property type="entry name" value="HUPs"/>
    <property type="match status" value="1"/>
</dbReference>
<dbReference type="Gene3D" id="3.10.290.10">
    <property type="entry name" value="RNA-binding S4 domain"/>
    <property type="match status" value="1"/>
</dbReference>
<dbReference type="Gene3D" id="1.10.240.10">
    <property type="entry name" value="Tyrosyl-Transfer RNA Synthetase"/>
    <property type="match status" value="1"/>
</dbReference>
<dbReference type="HAMAP" id="MF_02006">
    <property type="entry name" value="Tyr_tRNA_synth_type1"/>
    <property type="match status" value="1"/>
</dbReference>
<dbReference type="InterPro" id="IPR002305">
    <property type="entry name" value="aa-tRNA-synth_Ic"/>
</dbReference>
<dbReference type="InterPro" id="IPR014729">
    <property type="entry name" value="Rossmann-like_a/b/a_fold"/>
</dbReference>
<dbReference type="InterPro" id="IPR036986">
    <property type="entry name" value="S4_RNA-bd_sf"/>
</dbReference>
<dbReference type="InterPro" id="IPR054608">
    <property type="entry name" value="SYY-like_C"/>
</dbReference>
<dbReference type="InterPro" id="IPR002307">
    <property type="entry name" value="Tyr-tRNA-ligase"/>
</dbReference>
<dbReference type="InterPro" id="IPR024088">
    <property type="entry name" value="Tyr-tRNA-ligase_bac-type"/>
</dbReference>
<dbReference type="InterPro" id="IPR024107">
    <property type="entry name" value="Tyr-tRNA-ligase_bac_1"/>
</dbReference>
<dbReference type="NCBIfam" id="TIGR00234">
    <property type="entry name" value="tyrS"/>
    <property type="match status" value="1"/>
</dbReference>
<dbReference type="PANTHER" id="PTHR11766:SF0">
    <property type="entry name" value="TYROSINE--TRNA LIGASE, MITOCHONDRIAL"/>
    <property type="match status" value="1"/>
</dbReference>
<dbReference type="PANTHER" id="PTHR11766">
    <property type="entry name" value="TYROSYL-TRNA SYNTHETASE"/>
    <property type="match status" value="1"/>
</dbReference>
<dbReference type="Pfam" id="PF22421">
    <property type="entry name" value="SYY_C-terminal"/>
    <property type="match status" value="1"/>
</dbReference>
<dbReference type="Pfam" id="PF00579">
    <property type="entry name" value="tRNA-synt_1b"/>
    <property type="match status" value="1"/>
</dbReference>
<dbReference type="PRINTS" id="PR01040">
    <property type="entry name" value="TRNASYNTHTYR"/>
</dbReference>
<dbReference type="SUPFAM" id="SSF55174">
    <property type="entry name" value="Alpha-L RNA-binding motif"/>
    <property type="match status" value="1"/>
</dbReference>
<dbReference type="SUPFAM" id="SSF52374">
    <property type="entry name" value="Nucleotidylyl transferase"/>
    <property type="match status" value="1"/>
</dbReference>
<dbReference type="PROSITE" id="PS50889">
    <property type="entry name" value="S4"/>
    <property type="match status" value="1"/>
</dbReference>
<sequence length="426" mass="46880">MTATNELLQDLKARGLIAQCTADEELAEHLSTDCRTLYCGFDPTADSLHIGSLVPLLVLKRFQQAGHKPLALVGGATGLIGDPSFKAAERQLNTNEVVGDWVNKIKAQVSAFVDFTEEKNGAEVVNNLDWIGQINVIEFMRDVGKHFSVNAMIQKESVKQRIDREGSGISFTEFSYMLLQSYDFAALNKAKECTLQIGGSDQWGNITGGIDLTRRMNRNKVFGLTLPLVTKSDGTKFGKTESGTIWLDSNKTSPYAFYQFWLGTADADVYNFLRFFTFLTVEEIAAVEESDKSVQGRPEGQGILAREVTRLVHGEEGLASAERITKALFSGDLSSLTETDLAQLALDGLPSTELEASEQTIVEVLTQSELAKSNKMAREFIGNGAVSVNGEKVADTEAVLKKEDALFGKYSVIKRGKKLFNLYIWK</sequence>
<protein>
    <recommendedName>
        <fullName evidence="1">Tyrosine--tRNA ligase</fullName>
        <ecNumber evidence="1">6.1.1.1</ecNumber>
    </recommendedName>
    <alternativeName>
        <fullName evidence="1">Tyrosyl-tRNA synthetase</fullName>
        <shortName evidence="1">TyrRS</shortName>
    </alternativeName>
</protein>
<gene>
    <name evidence="1" type="primary">tyrS</name>
    <name type="ordered locus">VFMJ11_1854</name>
</gene>
<accession>B5FFR9</accession>
<feature type="chain" id="PRO_1000189345" description="Tyrosine--tRNA ligase">
    <location>
        <begin position="1"/>
        <end position="426"/>
    </location>
</feature>
<feature type="domain" description="S4 RNA-binding" evidence="1">
    <location>
        <begin position="359"/>
        <end position="426"/>
    </location>
</feature>
<feature type="short sequence motif" description="'HIGH' region">
    <location>
        <begin position="43"/>
        <end position="52"/>
    </location>
</feature>
<feature type="short sequence motif" description="'KMSKS' region">
    <location>
        <begin position="236"/>
        <end position="240"/>
    </location>
</feature>
<feature type="binding site" evidence="1">
    <location>
        <position position="38"/>
    </location>
    <ligand>
        <name>L-tyrosine</name>
        <dbReference type="ChEBI" id="CHEBI:58315"/>
    </ligand>
</feature>
<feature type="binding site" evidence="1">
    <location>
        <position position="176"/>
    </location>
    <ligand>
        <name>L-tyrosine</name>
        <dbReference type="ChEBI" id="CHEBI:58315"/>
    </ligand>
</feature>
<feature type="binding site" evidence="1">
    <location>
        <position position="180"/>
    </location>
    <ligand>
        <name>L-tyrosine</name>
        <dbReference type="ChEBI" id="CHEBI:58315"/>
    </ligand>
</feature>
<feature type="binding site" evidence="1">
    <location>
        <position position="239"/>
    </location>
    <ligand>
        <name>ATP</name>
        <dbReference type="ChEBI" id="CHEBI:30616"/>
    </ligand>
</feature>
<keyword id="KW-0030">Aminoacyl-tRNA synthetase</keyword>
<keyword id="KW-0067">ATP-binding</keyword>
<keyword id="KW-0963">Cytoplasm</keyword>
<keyword id="KW-0436">Ligase</keyword>
<keyword id="KW-0547">Nucleotide-binding</keyword>
<keyword id="KW-0648">Protein biosynthesis</keyword>
<keyword id="KW-0694">RNA-binding</keyword>
<name>SYY_ALIFM</name>
<comment type="function">
    <text evidence="1">Catalyzes the attachment of tyrosine to tRNA(Tyr) in a two-step reaction: tyrosine is first activated by ATP to form Tyr-AMP and then transferred to the acceptor end of tRNA(Tyr).</text>
</comment>
<comment type="catalytic activity">
    <reaction evidence="1">
        <text>tRNA(Tyr) + L-tyrosine + ATP = L-tyrosyl-tRNA(Tyr) + AMP + diphosphate + H(+)</text>
        <dbReference type="Rhea" id="RHEA:10220"/>
        <dbReference type="Rhea" id="RHEA-COMP:9706"/>
        <dbReference type="Rhea" id="RHEA-COMP:9707"/>
        <dbReference type="ChEBI" id="CHEBI:15378"/>
        <dbReference type="ChEBI" id="CHEBI:30616"/>
        <dbReference type="ChEBI" id="CHEBI:33019"/>
        <dbReference type="ChEBI" id="CHEBI:58315"/>
        <dbReference type="ChEBI" id="CHEBI:78442"/>
        <dbReference type="ChEBI" id="CHEBI:78536"/>
        <dbReference type="ChEBI" id="CHEBI:456215"/>
        <dbReference type="EC" id="6.1.1.1"/>
    </reaction>
</comment>
<comment type="subunit">
    <text evidence="1">Homodimer.</text>
</comment>
<comment type="subcellular location">
    <subcellularLocation>
        <location evidence="1">Cytoplasm</location>
    </subcellularLocation>
</comment>
<comment type="similarity">
    <text evidence="1">Belongs to the class-I aminoacyl-tRNA synthetase family. TyrS type 1 subfamily.</text>
</comment>
<organism>
    <name type="scientific">Aliivibrio fischeri (strain MJ11)</name>
    <name type="common">Vibrio fischeri</name>
    <dbReference type="NCBI Taxonomy" id="388396"/>
    <lineage>
        <taxon>Bacteria</taxon>
        <taxon>Pseudomonadati</taxon>
        <taxon>Pseudomonadota</taxon>
        <taxon>Gammaproteobacteria</taxon>
        <taxon>Vibrionales</taxon>
        <taxon>Vibrionaceae</taxon>
        <taxon>Aliivibrio</taxon>
    </lineage>
</organism>
<proteinExistence type="inferred from homology"/>